<protein>
    <recommendedName>
        <fullName evidence="1">HTH-type transcriptional repressor NanR</fullName>
    </recommendedName>
</protein>
<dbReference type="EMBL" id="CP000948">
    <property type="protein sequence ID" value="ACB04300.1"/>
    <property type="molecule type" value="Genomic_DNA"/>
</dbReference>
<dbReference type="RefSeq" id="WP_000523845.1">
    <property type="nucleotide sequence ID" value="NC_010473.1"/>
</dbReference>
<dbReference type="SMR" id="B1XHJ9"/>
<dbReference type="GeneID" id="75206076"/>
<dbReference type="KEGG" id="ecd:ECDH10B_3403"/>
<dbReference type="HOGENOM" id="CLU_017584_9_1_6"/>
<dbReference type="GO" id="GO:0003677">
    <property type="term" value="F:DNA binding"/>
    <property type="evidence" value="ECO:0007669"/>
    <property type="project" value="UniProtKB-KW"/>
</dbReference>
<dbReference type="GO" id="GO:0003700">
    <property type="term" value="F:DNA-binding transcription factor activity"/>
    <property type="evidence" value="ECO:0007669"/>
    <property type="project" value="UniProtKB-UniRule"/>
</dbReference>
<dbReference type="GO" id="GO:0045892">
    <property type="term" value="P:negative regulation of DNA-templated transcription"/>
    <property type="evidence" value="ECO:0007669"/>
    <property type="project" value="UniProtKB-UniRule"/>
</dbReference>
<dbReference type="CDD" id="cd07377">
    <property type="entry name" value="WHTH_GntR"/>
    <property type="match status" value="1"/>
</dbReference>
<dbReference type="FunFam" id="1.10.10.10:FF:000150">
    <property type="entry name" value="HTH-type transcriptional repressor NanR"/>
    <property type="match status" value="1"/>
</dbReference>
<dbReference type="FunFam" id="1.20.120.530:FF:000006">
    <property type="entry name" value="HTH-type transcriptional repressor NanR"/>
    <property type="match status" value="1"/>
</dbReference>
<dbReference type="Gene3D" id="1.20.120.530">
    <property type="entry name" value="GntR ligand-binding domain-like"/>
    <property type="match status" value="1"/>
</dbReference>
<dbReference type="Gene3D" id="1.10.10.10">
    <property type="entry name" value="Winged helix-like DNA-binding domain superfamily/Winged helix DNA-binding domain"/>
    <property type="match status" value="1"/>
</dbReference>
<dbReference type="HAMAP" id="MF_01236">
    <property type="entry name" value="HTH_NanR"/>
    <property type="match status" value="1"/>
</dbReference>
<dbReference type="InterPro" id="IPR011711">
    <property type="entry name" value="GntR_C"/>
</dbReference>
<dbReference type="InterPro" id="IPR008920">
    <property type="entry name" value="TF_FadR/GntR_C"/>
</dbReference>
<dbReference type="InterPro" id="IPR000524">
    <property type="entry name" value="Tscrpt_reg_HTH_GntR"/>
</dbReference>
<dbReference type="InterPro" id="IPR023730">
    <property type="entry name" value="Tscrpt_reg_NanR"/>
</dbReference>
<dbReference type="InterPro" id="IPR036388">
    <property type="entry name" value="WH-like_DNA-bd_sf"/>
</dbReference>
<dbReference type="InterPro" id="IPR036390">
    <property type="entry name" value="WH_DNA-bd_sf"/>
</dbReference>
<dbReference type="NCBIfam" id="NF003011">
    <property type="entry name" value="PRK03837.1"/>
    <property type="match status" value="1"/>
</dbReference>
<dbReference type="PANTHER" id="PTHR43537:SF53">
    <property type="entry name" value="HTH-TYPE TRANSCRIPTIONAL REPRESSOR NANR"/>
    <property type="match status" value="1"/>
</dbReference>
<dbReference type="PANTHER" id="PTHR43537">
    <property type="entry name" value="TRANSCRIPTIONAL REGULATOR, GNTR FAMILY"/>
    <property type="match status" value="1"/>
</dbReference>
<dbReference type="Pfam" id="PF07729">
    <property type="entry name" value="FCD"/>
    <property type="match status" value="1"/>
</dbReference>
<dbReference type="Pfam" id="PF00392">
    <property type="entry name" value="GntR"/>
    <property type="match status" value="1"/>
</dbReference>
<dbReference type="PRINTS" id="PR00035">
    <property type="entry name" value="HTHGNTR"/>
</dbReference>
<dbReference type="SMART" id="SM00895">
    <property type="entry name" value="FCD"/>
    <property type="match status" value="1"/>
</dbReference>
<dbReference type="SMART" id="SM00345">
    <property type="entry name" value="HTH_GNTR"/>
    <property type="match status" value="1"/>
</dbReference>
<dbReference type="SUPFAM" id="SSF48008">
    <property type="entry name" value="GntR ligand-binding domain-like"/>
    <property type="match status" value="1"/>
</dbReference>
<dbReference type="SUPFAM" id="SSF46785">
    <property type="entry name" value="Winged helix' DNA-binding domain"/>
    <property type="match status" value="1"/>
</dbReference>
<dbReference type="PROSITE" id="PS50949">
    <property type="entry name" value="HTH_GNTR"/>
    <property type="match status" value="1"/>
</dbReference>
<gene>
    <name evidence="1" type="primary">nanR</name>
    <name type="ordered locus">ECDH10B_3403</name>
</gene>
<keyword id="KW-0238">DNA-binding</keyword>
<keyword id="KW-0678">Repressor</keyword>
<keyword id="KW-0804">Transcription</keyword>
<keyword id="KW-0805">Transcription regulation</keyword>
<proteinExistence type="inferred from homology"/>
<evidence type="ECO:0000255" key="1">
    <source>
        <dbReference type="HAMAP-Rule" id="MF_01236"/>
    </source>
</evidence>
<evidence type="ECO:0000256" key="2">
    <source>
        <dbReference type="SAM" id="MobiDB-lite"/>
    </source>
</evidence>
<organism>
    <name type="scientific">Escherichia coli (strain K12 / DH10B)</name>
    <dbReference type="NCBI Taxonomy" id="316385"/>
    <lineage>
        <taxon>Bacteria</taxon>
        <taxon>Pseudomonadati</taxon>
        <taxon>Pseudomonadota</taxon>
        <taxon>Gammaproteobacteria</taxon>
        <taxon>Enterobacterales</taxon>
        <taxon>Enterobacteriaceae</taxon>
        <taxon>Escherichia</taxon>
    </lineage>
</organism>
<accession>B1XHJ9</accession>
<sequence>MGLMNAFDSQTEDSSPAIGRNLRSRPLARKKLSEMVEEELEQMIRRREFGEGEQLPSERELMAFFNVGRPSVREALAALKRKGLVQINNGERARVSRPSADTIIGELSGMAKDFLSHPGGIAHFEQLRLFFESSLVRYAAEHATDEQIDLLAKALEINSQSLDNNAAFIRSDVDFHRVLAEIPGNPIFMAIHVALLDWLIAARPTVTDQALHEHNNVSYQQHIAIVDAIRRHDPDEADRALQSHLNSVSATWHAFGQTTNKKK</sequence>
<comment type="function">
    <text evidence="1">Transcriptional repressor that controls expression of the genes required for the catabolism of sialic acids.</text>
</comment>
<comment type="similarity">
    <text evidence="1">Belongs to the NanR family.</text>
</comment>
<feature type="chain" id="PRO_1000139722" description="HTH-type transcriptional repressor NanR">
    <location>
        <begin position="1"/>
        <end position="263"/>
    </location>
</feature>
<feature type="domain" description="HTH gntR-type" evidence="1">
    <location>
        <begin position="30"/>
        <end position="98"/>
    </location>
</feature>
<feature type="DNA-binding region" description="H-T-H motif" evidence="1">
    <location>
        <begin position="58"/>
        <end position="77"/>
    </location>
</feature>
<feature type="region of interest" description="Disordered" evidence="2">
    <location>
        <begin position="1"/>
        <end position="22"/>
    </location>
</feature>
<reference key="1">
    <citation type="journal article" date="2008" name="J. Bacteriol.">
        <title>The complete genome sequence of Escherichia coli DH10B: insights into the biology of a laboratory workhorse.</title>
        <authorList>
            <person name="Durfee T."/>
            <person name="Nelson R."/>
            <person name="Baldwin S."/>
            <person name="Plunkett G. III"/>
            <person name="Burland V."/>
            <person name="Mau B."/>
            <person name="Petrosino J.F."/>
            <person name="Qin X."/>
            <person name="Muzny D.M."/>
            <person name="Ayele M."/>
            <person name="Gibbs R.A."/>
            <person name="Csorgo B."/>
            <person name="Posfai G."/>
            <person name="Weinstock G.M."/>
            <person name="Blattner F.R."/>
        </authorList>
    </citation>
    <scope>NUCLEOTIDE SEQUENCE [LARGE SCALE GENOMIC DNA]</scope>
    <source>
        <strain>K12 / DH10B</strain>
    </source>
</reference>
<name>NANR_ECODH</name>